<reference key="1">
    <citation type="journal article" date="1975" name="Eur. J. Biochem.">
        <title>Primary structures of the alpha-crystallin A chains of seven mammalian species.</title>
        <authorList>
            <person name="de Jong W.W."/>
            <person name="van der Ouderaa F.J."/>
            <person name="Versteeg M."/>
            <person name="Groenewoud G."/>
            <person name="van Amelsvoort J.M."/>
            <person name="Bloemendal H."/>
        </authorList>
    </citation>
    <scope>PARTIAL PROTEIN SEQUENCE</scope>
</reference>
<protein>
    <recommendedName>
        <fullName>Alpha-crystallin A chain</fullName>
    </recommendedName>
</protein>
<feature type="chain" id="PRO_0000125859" description="Alpha-crystallin A chain">
    <location>
        <begin position="1"/>
        <end position="173"/>
    </location>
</feature>
<feature type="domain" description="sHSP" evidence="5">
    <location>
        <begin position="52"/>
        <end position="162"/>
    </location>
</feature>
<feature type="region of interest" description="Required for complex formation with BFSP1 and BFSP2" evidence="4">
    <location>
        <begin position="1"/>
        <end position="63"/>
    </location>
</feature>
<feature type="region of interest" description="Disordered" evidence="6">
    <location>
        <begin position="144"/>
        <end position="173"/>
    </location>
</feature>
<feature type="compositionally biased region" description="Basic and acidic residues" evidence="6">
    <location>
        <begin position="153"/>
        <end position="167"/>
    </location>
</feature>
<feature type="binding site" evidence="2">
    <location>
        <position position="100"/>
    </location>
    <ligand>
        <name>Zn(2+)</name>
        <dbReference type="ChEBI" id="CHEBI:29105"/>
        <label>1</label>
    </ligand>
</feature>
<feature type="binding site" evidence="2">
    <location>
        <position position="102"/>
    </location>
    <ligand>
        <name>Zn(2+)</name>
        <dbReference type="ChEBI" id="CHEBI:29105"/>
        <label>1</label>
    </ligand>
</feature>
<feature type="binding site" evidence="2">
    <location>
        <position position="107"/>
    </location>
    <ligand>
        <name>Zn(2+)</name>
        <dbReference type="ChEBI" id="CHEBI:29105"/>
        <label>2</label>
    </ligand>
</feature>
<feature type="binding site" evidence="2">
    <location>
        <position position="154"/>
    </location>
    <ligand>
        <name>Zn(2+)</name>
        <dbReference type="ChEBI" id="CHEBI:29105"/>
        <label>3</label>
    </ligand>
</feature>
<feature type="modified residue" description="N-acetylmethionine" evidence="3 7">
    <location>
        <position position="1"/>
    </location>
</feature>
<feature type="modified residue" description="Deamidated glutamine; partial" evidence="1">
    <location>
        <position position="6"/>
    </location>
</feature>
<feature type="modified residue" description="Phosphoserine" evidence="4">
    <location>
        <position position="45"/>
    </location>
</feature>
<feature type="modified residue" description="Deamidated glutamine; partial" evidence="1">
    <location>
        <position position="50"/>
    </location>
</feature>
<feature type="modified residue" description="N6-acetyllysine" evidence="4">
    <location>
        <position position="70"/>
    </location>
</feature>
<feature type="modified residue" description="N6-acetyllysine" evidence="4">
    <location>
        <position position="99"/>
    </location>
</feature>
<feature type="modified residue" description="Deamidated asparagine; partial" evidence="1">
    <location>
        <position position="101"/>
    </location>
</feature>
<feature type="modified residue" description="Phosphoserine" evidence="2">
    <location>
        <position position="122"/>
    </location>
</feature>
<feature type="modified residue" description="Deamidated asparagine; partial" evidence="1">
    <location>
        <position position="123"/>
    </location>
</feature>
<feature type="glycosylation site" description="O-linked (GlcNAc) serine" evidence="1">
    <location>
        <position position="162"/>
    </location>
</feature>
<comment type="function">
    <text evidence="4">Contributes to the transparency and refractive index of the lens. Acts as a chaperone, preventing aggregation of various proteins under a wide range of stress conditions. Required for the correct formation of lens intermediate filaments as part of a complex composed of BFSP1, BFSP2 and CRYAA.</text>
</comment>
<comment type="subunit">
    <text evidence="2 4">Heteromer composed of three CRYAA and one CRYAB subunits. Inter-subunit bridging via zinc ions enhances stability, which is crucial as there is no protein turn over in the lens. Can also form homodimers and homotetramers (dimers of dimers) which serve as the building blocks of homooligomers (By similarity). Within homooligomers, the zinc-binding motif is created from residues of 3 different molecules. His-100 and Glu-102 from one molecule are ligands of the zinc ion, and His-107 and His-154 residues from additional molecules complete the site with tetrahedral coordination geometry (By similarity). Part of a complex required for lens intermediate filament formation composed of BFSP1, BFSP2 and CRYAA (By similarity).</text>
</comment>
<comment type="subcellular location">
    <subcellularLocation>
        <location evidence="4">Cytoplasm</location>
    </subcellularLocation>
    <subcellularLocation>
        <location evidence="4">Nucleus</location>
    </subcellularLocation>
    <text evidence="4">Translocates to the nucleus during heat shock and resides in sub-nuclear structures known as SC35 speckles or nuclear splicing speckles.</text>
</comment>
<comment type="PTM">
    <text evidence="4">Acetylation at Lys-70 may increase chaperone activity.</text>
</comment>
<comment type="PTM">
    <text evidence="4">Undergoes age-dependent proteolytical cleavage at the C-terminus.</text>
</comment>
<comment type="similarity">
    <text evidence="5">Belongs to the small heat shock protein (HSP20) family.</text>
</comment>
<accession>P68282</accession>
<accession>P02473</accession>
<dbReference type="PIR" id="A91230">
    <property type="entry name" value="CYCTAA"/>
</dbReference>
<dbReference type="RefSeq" id="XP_003991411.1">
    <property type="nucleotide sequence ID" value="XM_003991362.4"/>
</dbReference>
<dbReference type="SMR" id="P68282"/>
<dbReference type="FunCoup" id="P68282">
    <property type="interactions" value="22"/>
</dbReference>
<dbReference type="STRING" id="9685.ENSFCAP00000000208"/>
<dbReference type="GlyCosmos" id="P68282">
    <property type="glycosylation" value="1 site, No reported glycans"/>
</dbReference>
<dbReference type="PaxDb" id="9685-ENSFCAP00000000208"/>
<dbReference type="Ensembl" id="ENSFCAT00000000224.4">
    <property type="protein sequence ID" value="ENSFCAP00000000208.1"/>
    <property type="gene ID" value="ENSFCAG00000000224.4"/>
</dbReference>
<dbReference type="GeneID" id="101083874"/>
<dbReference type="KEGG" id="fca:101083874"/>
<dbReference type="CTD" id="1409"/>
<dbReference type="eggNOG" id="KOG3591">
    <property type="taxonomic scope" value="Eukaryota"/>
</dbReference>
<dbReference type="GeneTree" id="ENSGT00940000160159"/>
<dbReference type="HOGENOM" id="CLU_095001_2_0_1"/>
<dbReference type="InParanoid" id="P68282"/>
<dbReference type="OMA" id="QQDDHGY"/>
<dbReference type="OrthoDB" id="1431247at2759"/>
<dbReference type="TreeFam" id="TF105049"/>
<dbReference type="Proteomes" id="UP000011712">
    <property type="component" value="Chromosome C2"/>
</dbReference>
<dbReference type="Bgee" id="ENSFCAG00000000224">
    <property type="expression patterns" value="Expressed in eyeball of camera-type eye and 2 other cell types or tissues"/>
</dbReference>
<dbReference type="GO" id="GO:0005737">
    <property type="term" value="C:cytoplasm"/>
    <property type="evidence" value="ECO:0000250"/>
    <property type="project" value="UniProtKB"/>
</dbReference>
<dbReference type="GO" id="GO:0005829">
    <property type="term" value="C:cytosol"/>
    <property type="evidence" value="ECO:0007669"/>
    <property type="project" value="Ensembl"/>
</dbReference>
<dbReference type="GO" id="GO:0005654">
    <property type="term" value="C:nucleoplasm"/>
    <property type="evidence" value="ECO:0007669"/>
    <property type="project" value="Ensembl"/>
</dbReference>
<dbReference type="GO" id="GO:0005634">
    <property type="term" value="C:nucleus"/>
    <property type="evidence" value="ECO:0000250"/>
    <property type="project" value="UniProtKB"/>
</dbReference>
<dbReference type="GO" id="GO:0032991">
    <property type="term" value="C:protein-containing complex"/>
    <property type="evidence" value="ECO:0007669"/>
    <property type="project" value="Ensembl"/>
</dbReference>
<dbReference type="GO" id="GO:0042802">
    <property type="term" value="F:identical protein binding"/>
    <property type="evidence" value="ECO:0007669"/>
    <property type="project" value="Ensembl"/>
</dbReference>
<dbReference type="GO" id="GO:0046872">
    <property type="term" value="F:metal ion binding"/>
    <property type="evidence" value="ECO:0007669"/>
    <property type="project" value="UniProtKB-KW"/>
</dbReference>
<dbReference type="GO" id="GO:0005212">
    <property type="term" value="F:structural constituent of eye lens"/>
    <property type="evidence" value="ECO:0007669"/>
    <property type="project" value="UniProtKB-KW"/>
</dbReference>
<dbReference type="GO" id="GO:0051082">
    <property type="term" value="F:unfolded protein binding"/>
    <property type="evidence" value="ECO:0000318"/>
    <property type="project" value="GO_Central"/>
</dbReference>
<dbReference type="GO" id="GO:0007015">
    <property type="term" value="P:actin filament organization"/>
    <property type="evidence" value="ECO:0007669"/>
    <property type="project" value="Ensembl"/>
</dbReference>
<dbReference type="GO" id="GO:0060561">
    <property type="term" value="P:apoptotic process involved in morphogenesis"/>
    <property type="evidence" value="ECO:0007669"/>
    <property type="project" value="Ensembl"/>
</dbReference>
<dbReference type="GO" id="GO:0048596">
    <property type="term" value="P:embryonic camera-type eye morphogenesis"/>
    <property type="evidence" value="ECO:0007669"/>
    <property type="project" value="Ensembl"/>
</dbReference>
<dbReference type="GO" id="GO:0002088">
    <property type="term" value="P:lens development in camera-type eye"/>
    <property type="evidence" value="ECO:0000318"/>
    <property type="project" value="GO_Central"/>
</dbReference>
<dbReference type="GO" id="GO:0070309">
    <property type="term" value="P:lens fiber cell morphogenesis"/>
    <property type="evidence" value="ECO:0007669"/>
    <property type="project" value="Ensembl"/>
</dbReference>
<dbReference type="GO" id="GO:0007017">
    <property type="term" value="P:microtubule-based process"/>
    <property type="evidence" value="ECO:0007669"/>
    <property type="project" value="Ensembl"/>
</dbReference>
<dbReference type="GO" id="GO:0007005">
    <property type="term" value="P:mitochondrion organization"/>
    <property type="evidence" value="ECO:0007669"/>
    <property type="project" value="Ensembl"/>
</dbReference>
<dbReference type="GO" id="GO:0043066">
    <property type="term" value="P:negative regulation of apoptotic process"/>
    <property type="evidence" value="ECO:0000318"/>
    <property type="project" value="GO_Central"/>
</dbReference>
<dbReference type="GO" id="GO:0010629">
    <property type="term" value="P:negative regulation of gene expression"/>
    <property type="evidence" value="ECO:0007669"/>
    <property type="project" value="Ensembl"/>
</dbReference>
<dbReference type="GO" id="GO:0032387">
    <property type="term" value="P:negative regulation of intracellular transport"/>
    <property type="evidence" value="ECO:0007669"/>
    <property type="project" value="Ensembl"/>
</dbReference>
<dbReference type="GO" id="GO:0030307">
    <property type="term" value="P:positive regulation of cell growth"/>
    <property type="evidence" value="ECO:0007669"/>
    <property type="project" value="Ensembl"/>
</dbReference>
<dbReference type="GO" id="GO:0042026">
    <property type="term" value="P:protein refolding"/>
    <property type="evidence" value="ECO:0000318"/>
    <property type="project" value="GO_Central"/>
</dbReference>
<dbReference type="GO" id="GO:0050821">
    <property type="term" value="P:protein stabilization"/>
    <property type="evidence" value="ECO:0007669"/>
    <property type="project" value="Ensembl"/>
</dbReference>
<dbReference type="GO" id="GO:0009408">
    <property type="term" value="P:response to heat"/>
    <property type="evidence" value="ECO:0000318"/>
    <property type="project" value="GO_Central"/>
</dbReference>
<dbReference type="GO" id="GO:0042542">
    <property type="term" value="P:response to hydrogen peroxide"/>
    <property type="evidence" value="ECO:0007669"/>
    <property type="project" value="Ensembl"/>
</dbReference>
<dbReference type="GO" id="GO:0001666">
    <property type="term" value="P:response to hypoxia"/>
    <property type="evidence" value="ECO:0007669"/>
    <property type="project" value="Ensembl"/>
</dbReference>
<dbReference type="GO" id="GO:0070141">
    <property type="term" value="P:response to UV-A"/>
    <property type="evidence" value="ECO:0007669"/>
    <property type="project" value="Ensembl"/>
</dbReference>
<dbReference type="GO" id="GO:0007021">
    <property type="term" value="P:tubulin complex assembly"/>
    <property type="evidence" value="ECO:0007669"/>
    <property type="project" value="Ensembl"/>
</dbReference>
<dbReference type="GO" id="GO:0007601">
    <property type="term" value="P:visual perception"/>
    <property type="evidence" value="ECO:0007669"/>
    <property type="project" value="Ensembl"/>
</dbReference>
<dbReference type="CDD" id="cd06497">
    <property type="entry name" value="ACD_alphaA-crystallin_HspB4"/>
    <property type="match status" value="1"/>
</dbReference>
<dbReference type="FunFam" id="2.60.40.790:FF:000008">
    <property type="entry name" value="Alpha-crystallin A chain"/>
    <property type="match status" value="1"/>
</dbReference>
<dbReference type="Gene3D" id="2.60.40.790">
    <property type="match status" value="1"/>
</dbReference>
<dbReference type="InterPro" id="IPR002068">
    <property type="entry name" value="A-crystallin/Hsp20_dom"/>
</dbReference>
<dbReference type="InterPro" id="IPR055269">
    <property type="entry name" value="Alpha-crystallin/HSP_16"/>
</dbReference>
<dbReference type="InterPro" id="IPR001436">
    <property type="entry name" value="Alpha-crystallin/sHSP_animal"/>
</dbReference>
<dbReference type="InterPro" id="IPR003090">
    <property type="entry name" value="Alpha-crystallin_N"/>
</dbReference>
<dbReference type="InterPro" id="IPR008978">
    <property type="entry name" value="HSP20-like_chaperone"/>
</dbReference>
<dbReference type="PANTHER" id="PTHR45640:SF14">
    <property type="entry name" value="ALPHA-CRYSTALLIN A CHAIN"/>
    <property type="match status" value="1"/>
</dbReference>
<dbReference type="PANTHER" id="PTHR45640">
    <property type="entry name" value="HEAT SHOCK PROTEIN HSP-12.2-RELATED"/>
    <property type="match status" value="1"/>
</dbReference>
<dbReference type="Pfam" id="PF00525">
    <property type="entry name" value="Crystallin"/>
    <property type="match status" value="1"/>
</dbReference>
<dbReference type="Pfam" id="PF00011">
    <property type="entry name" value="HSP20"/>
    <property type="match status" value="1"/>
</dbReference>
<dbReference type="PIRSF" id="PIRSF036514">
    <property type="entry name" value="Sm_HSP_B1"/>
    <property type="match status" value="1"/>
</dbReference>
<dbReference type="PRINTS" id="PR00299">
    <property type="entry name" value="ACRYSTALLIN"/>
</dbReference>
<dbReference type="SUPFAM" id="SSF49764">
    <property type="entry name" value="HSP20-like chaperones"/>
    <property type="match status" value="1"/>
</dbReference>
<dbReference type="PROSITE" id="PS01031">
    <property type="entry name" value="SHSP"/>
    <property type="match status" value="1"/>
</dbReference>
<evidence type="ECO:0000250" key="1"/>
<evidence type="ECO:0000250" key="2">
    <source>
        <dbReference type="UniProtKB" id="P02470"/>
    </source>
</evidence>
<evidence type="ECO:0000250" key="3">
    <source>
        <dbReference type="UniProtKB" id="P02474"/>
    </source>
</evidence>
<evidence type="ECO:0000250" key="4">
    <source>
        <dbReference type="UniProtKB" id="P02489"/>
    </source>
</evidence>
<evidence type="ECO:0000255" key="5">
    <source>
        <dbReference type="PROSITE-ProRule" id="PRU00285"/>
    </source>
</evidence>
<evidence type="ECO:0000256" key="6">
    <source>
        <dbReference type="SAM" id="MobiDB-lite"/>
    </source>
</evidence>
<evidence type="ECO:0000305" key="7"/>
<organism>
    <name type="scientific">Felis catus</name>
    <name type="common">Cat</name>
    <name type="synonym">Felis silvestris catus</name>
    <dbReference type="NCBI Taxonomy" id="9685"/>
    <lineage>
        <taxon>Eukaryota</taxon>
        <taxon>Metazoa</taxon>
        <taxon>Chordata</taxon>
        <taxon>Craniata</taxon>
        <taxon>Vertebrata</taxon>
        <taxon>Euteleostomi</taxon>
        <taxon>Mammalia</taxon>
        <taxon>Eutheria</taxon>
        <taxon>Laurasiatheria</taxon>
        <taxon>Carnivora</taxon>
        <taxon>Feliformia</taxon>
        <taxon>Felidae</taxon>
        <taxon>Felinae</taxon>
        <taxon>Felis</taxon>
    </lineage>
</organism>
<keyword id="KW-0007">Acetylation</keyword>
<keyword id="KW-0143">Chaperone</keyword>
<keyword id="KW-0963">Cytoplasm</keyword>
<keyword id="KW-0903">Direct protein sequencing</keyword>
<keyword id="KW-0273">Eye lens protein</keyword>
<keyword id="KW-0325">Glycoprotein</keyword>
<keyword id="KW-0479">Metal-binding</keyword>
<keyword id="KW-0488">Methylation</keyword>
<keyword id="KW-0539">Nucleus</keyword>
<keyword id="KW-0597">Phosphoprotein</keyword>
<keyword id="KW-1185">Reference proteome</keyword>
<keyword id="KW-0862">Zinc</keyword>
<proteinExistence type="evidence at protein level"/>
<sequence>MDIAIQHPWFKRALGPFYPSRLFDQFFGEGLFEYDLLPFLSSTISPYYRQSLFRTVLDSGISEVRSDRDKFVIFLDVKHFSPEDLTVKVLEDFVEIHGKHNERQDDHGYISREFHRRYRLPSNVDQSALSCSLSADGMLTFSGPKVPSGVDAGHSERAIPVSREEKPSSAPSS</sequence>
<gene>
    <name type="primary">CRYAA</name>
</gene>
<name>CRYAA_FELCA</name>